<reference key="1">
    <citation type="thesis" date="1997" institute="Statens Serum Institut / Copenhagen" country="Denmark">
        <authorList>
            <person name="Nielsen R.V."/>
        </authorList>
    </citation>
    <scope>NUCLEOTIDE SEQUENCE [GENOMIC DNA]</scope>
    <scope>CHARACTERIZATION</scope>
    <source>
        <strain>ATCC 35801 / TMC 107 / Erdman</strain>
    </source>
</reference>
<reference key="2">
    <citation type="journal article" date="1998" name="Nature">
        <title>Deciphering the biology of Mycobacterium tuberculosis from the complete genome sequence.</title>
        <authorList>
            <person name="Cole S.T."/>
            <person name="Brosch R."/>
            <person name="Parkhill J."/>
            <person name="Garnier T."/>
            <person name="Churcher C.M."/>
            <person name="Harris D.E."/>
            <person name="Gordon S.V."/>
            <person name="Eiglmeier K."/>
            <person name="Gas S."/>
            <person name="Barry C.E. III"/>
            <person name="Tekaia F."/>
            <person name="Badcock K."/>
            <person name="Basham D."/>
            <person name="Brown D."/>
            <person name="Chillingworth T."/>
            <person name="Connor R."/>
            <person name="Davies R.M."/>
            <person name="Devlin K."/>
            <person name="Feltwell T."/>
            <person name="Gentles S."/>
            <person name="Hamlin N."/>
            <person name="Holroyd S."/>
            <person name="Hornsby T."/>
            <person name="Jagels K."/>
            <person name="Krogh A."/>
            <person name="McLean J."/>
            <person name="Moule S."/>
            <person name="Murphy L.D."/>
            <person name="Oliver S."/>
            <person name="Osborne J."/>
            <person name="Quail M.A."/>
            <person name="Rajandream M.A."/>
            <person name="Rogers J."/>
            <person name="Rutter S."/>
            <person name="Seeger K."/>
            <person name="Skelton S."/>
            <person name="Squares S."/>
            <person name="Squares R."/>
            <person name="Sulston J.E."/>
            <person name="Taylor K."/>
            <person name="Whitehead S."/>
            <person name="Barrell B.G."/>
        </authorList>
    </citation>
    <scope>NUCLEOTIDE SEQUENCE [LARGE SCALE GENOMIC DNA]</scope>
    <source>
        <strain>ATCC 25618 / H37Rv</strain>
    </source>
</reference>
<reference key="3">
    <citation type="journal article" date="2000" name="Infect. Immun.">
        <title>Comparative evaluation of low-molecular-mass proteins from Mycobacterium tuberculosis identifies members of the ESAT-6 family as immunodominant T-cell antigens.</title>
        <authorList>
            <person name="Skjot R.L."/>
            <person name="Oettinger T."/>
            <person name="Rosenkrands I."/>
            <person name="Ravn P."/>
            <person name="Brock I."/>
            <person name="Jacobsen S."/>
            <person name="Andersen P."/>
        </authorList>
    </citation>
    <scope>PROTEIN SEQUENCE OF 13-27</scope>
    <scope>BIOTECHNOLOGY</scope>
</reference>
<reference key="4">
    <citation type="journal article" date="2002" name="Infect. Immun.">
        <title>Epitope mapping of the immunodominant antigen TB10.4 and the two homologous proteins TB10.3 and TB12.9, which constitute a subfamily of the esat-6 gene family.</title>
        <authorList>
            <person name="Skjoet R.L."/>
            <person name="Brock I."/>
            <person name="Arend S.M."/>
            <person name="Munk M.E."/>
            <person name="Theisen M."/>
            <person name="Ottenhoff T.H."/>
            <person name="Andersen P."/>
        </authorList>
    </citation>
    <scope>BIOTECHNOLOGY</scope>
</reference>
<reference key="5">
    <citation type="journal article" date="2004" name="FEMS Microbiol. Lett.">
        <title>Characterisation of complex formation between members of the Mycobacterium tuberculosis complex CFP-10/ESAT-6 protein family: towards an understanding of the rules governing complex formation and thereby functional flexibility.</title>
        <authorList>
            <person name="Lightbody K.L."/>
            <person name="Renshaw P.S."/>
            <person name="Collins M.L."/>
            <person name="Wright R.L."/>
            <person name="Hunt D.M."/>
            <person name="Gordon S.V."/>
            <person name="Hewinson R.G."/>
            <person name="Buxton R.S."/>
            <person name="Williamson R.A."/>
            <person name="Carr M.D."/>
        </authorList>
    </citation>
    <scope>INTERACTION WITH ESXG</scope>
</reference>
<reference key="6">
    <citation type="journal article" date="2006" name="Infect. Immun.">
        <title>High frequency of CD4+ T cells specific for the TB10.4 protein correlates with protection against Mycobacterium tuberculosis infection.</title>
        <authorList>
            <person name="Hervas-Stubbs S."/>
            <person name="Majlessi L."/>
            <person name="Simsova M."/>
            <person name="Morova J."/>
            <person name="Rojas M.J."/>
            <person name="Nouze C."/>
            <person name="Brodin P."/>
            <person name="Sebo P."/>
            <person name="Leclerc C."/>
        </authorList>
    </citation>
    <scope>BIOTECHNOLOGY</scope>
</reference>
<reference key="7">
    <citation type="journal article" date="2008" name="J. Biol. Chem.">
        <title>Molecular features governing the stability and specificity of functional complex formation by Mycobacterium tuberculosis CFP-10/ESAT-6 family proteins.</title>
        <authorList>
            <person name="Lightbody K.L."/>
            <person name="Ilghari D."/>
            <person name="Waters L.C."/>
            <person name="Carey G."/>
            <person name="Bailey M.A."/>
            <person name="Williamson R.A."/>
            <person name="Renshaw P.S."/>
            <person name="Carr M.D."/>
        </authorList>
    </citation>
    <scope>INTERACTION WITH ESXG</scope>
</reference>
<reference key="8">
    <citation type="journal article" date="2009" name="PLoS Pathog.">
        <title>Systematic genetic nomenclature for type VII secretion systems.</title>
        <authorList>
            <person name="Bitter W."/>
            <person name="Houben E.N."/>
            <person name="Bottai D."/>
            <person name="Brodin P."/>
            <person name="Brown E.J."/>
            <person name="Cox J.S."/>
            <person name="Derbyshire K."/>
            <person name="Fortune S.M."/>
            <person name="Gao L.Y."/>
            <person name="Liu J."/>
            <person name="Gey van Pittius N.C."/>
            <person name="Pym A.S."/>
            <person name="Rubin E.J."/>
            <person name="Sherman D.R."/>
            <person name="Cole S.T."/>
            <person name="Brosch R."/>
        </authorList>
    </citation>
    <scope>NOMENCLATURE</scope>
</reference>
<reference key="9">
    <citation type="journal article" date="2010" name="J. Bacteriol.">
        <title>Conservation of structure and protein-protein interactions mediated by the secreted mycobacterial proteins EsxA, EsxB, and EspA.</title>
        <authorList>
            <person name="Callahan B."/>
            <person name="Nguyen K."/>
            <person name="Collins A."/>
            <person name="Valdes K."/>
            <person name="Caplow M."/>
            <person name="Crossman D.K."/>
            <person name="Steyn A.J."/>
            <person name="Eisele L."/>
            <person name="Derbyshire K.M."/>
        </authorList>
    </citation>
    <scope>SUBUNIT</scope>
    <source>
        <strain>ATCC 25618 / H37Rv</strain>
    </source>
</reference>
<reference key="10">
    <citation type="journal article" date="2010" name="FEBS Lett.">
        <title>Stoichiometric protein complex formation and over-expression using the prokaryotic native operon structure.</title>
        <authorList>
            <person name="Poulsen C."/>
            <person name="Holton S."/>
            <person name="Geerlof A."/>
            <person name="Wilmanns M."/>
            <person name="Song Y.H."/>
        </authorList>
    </citation>
    <scope>SUBUNIT</scope>
    <source>
        <strain>ATCC 25618 / H37Rv</strain>
    </source>
</reference>
<reference key="11">
    <citation type="journal article" date="2011" name="Mol. Cell. Proteomics">
        <title>Proteogenomic analysis of Mycobacterium tuberculosis by high resolution mass spectrometry.</title>
        <authorList>
            <person name="Kelkar D.S."/>
            <person name="Kumar D."/>
            <person name="Kumar P."/>
            <person name="Balakrishnan L."/>
            <person name="Muthusamy B."/>
            <person name="Yadav A.K."/>
            <person name="Shrivastava P."/>
            <person name="Marimuthu A."/>
            <person name="Anand S."/>
            <person name="Sundaram H."/>
            <person name="Kingsbury R."/>
            <person name="Harsha H.C."/>
            <person name="Nair B."/>
            <person name="Prasad T.S."/>
            <person name="Chauhan D.S."/>
            <person name="Katoch K."/>
            <person name="Katoch V.M."/>
            <person name="Kumar P."/>
            <person name="Chaerkady R."/>
            <person name="Ramachandran S."/>
            <person name="Dash D."/>
            <person name="Pandey A."/>
        </authorList>
    </citation>
    <scope>IDENTIFICATION BY MASS SPECTROMETRY [LARGE SCALE ANALYSIS]</scope>
    <source>
        <strain>ATCC 25618 / H37Rv</strain>
    </source>
</reference>
<reference key="12">
    <citation type="journal article" date="2013" name="PLoS Pathog.">
        <title>Mycobacterium tuberculosis type VII secreted effector EsxH targets host ESCRT to impair trafficking.</title>
        <authorList>
            <person name="Mehra A."/>
            <person name="Zahra A."/>
            <person name="Thompson V."/>
            <person name="Sirisaengtaksin N."/>
            <person name="Wells A."/>
            <person name="Porto M."/>
            <person name="Koester S."/>
            <person name="Penberthy K."/>
            <person name="Kubota Y."/>
            <person name="Dricot A."/>
            <person name="Rogan D."/>
            <person name="Vidal M."/>
            <person name="Hill D.E."/>
            <person name="Bean A.J."/>
            <person name="Philips J.A."/>
        </authorList>
    </citation>
    <scope>FUNCTION IN VIRULENCE</scope>
    <scope>SUBCELLULAR LOCATION</scope>
    <scope>INTERACTION WITH ESXG AND HOST HGS/HRS</scope>
    <scope>MUTAGENESIS OF HIS-14; HIS-70; HIS-76 AND GLU-77</scope>
    <source>
        <strain>H37Rv</strain>
    </source>
</reference>
<reference key="13">
    <citation type="journal article" date="2014" name="Hum. Vaccin. Immunother.">
        <title>A novel vaccine p846 encoding Rv3615c, Mtb10.4, and Rv2660c elicits robust immune response and alleviates lung injury induced by Mycobacterium infection.</title>
        <authorList>
            <person name="Kong H."/>
            <person name="Dong C."/>
            <person name="Xiong S."/>
        </authorList>
    </citation>
    <scope>BIOTECHNOLOGY</scope>
</reference>
<reference key="14">
    <citation type="journal article" date="2011" name="J. Biol. Chem.">
        <title>Solution structure of the Mycobacterium tuberculosis EsxG.EsxH complex: functional implications and comparisons with other M. tuberculosis Esx family complexes.</title>
        <authorList>
            <person name="Ilghari D."/>
            <person name="Lightbody K.L."/>
            <person name="Veverka V."/>
            <person name="Waters L.C."/>
            <person name="Muskett F.W."/>
            <person name="Renshaw P.S."/>
            <person name="Carr M.D."/>
        </authorList>
    </citation>
    <scope>STRUCTURE BY NMR</scope>
    <scope>INTERACTION WITH ESXG</scope>
    <scope>ZINC-BINDING</scope>
    <scope>SUBCELLULAR LOCATION</scope>
</reference>
<gene>
    <name evidence="12 13" type="primary">esxH</name>
    <name type="synonym">cfp7</name>
    <name type="ordered locus">Rv0288</name>
    <name type="ORF">MTV035.16</name>
</gene>
<accession>P9WNK3</accession>
<accession>L0T606</accession>
<accession>O53693</accession>
<accession>P0A568</accession>
<name>ESXH_MYCTU</name>
<organism>
    <name type="scientific">Mycobacterium tuberculosis (strain ATCC 25618 / H37Rv)</name>
    <dbReference type="NCBI Taxonomy" id="83332"/>
    <lineage>
        <taxon>Bacteria</taxon>
        <taxon>Bacillati</taxon>
        <taxon>Actinomycetota</taxon>
        <taxon>Actinomycetes</taxon>
        <taxon>Mycobacteriales</taxon>
        <taxon>Mycobacteriaceae</taxon>
        <taxon>Mycobacterium</taxon>
        <taxon>Mycobacterium tuberculosis complex</taxon>
    </lineage>
</organism>
<proteinExistence type="evidence at protein level"/>
<dbReference type="EMBL" id="AJ002067">
    <property type="protein sequence ID" value="CAA05168.1"/>
    <property type="molecule type" value="Genomic_DNA"/>
</dbReference>
<dbReference type="EMBL" id="AL123456">
    <property type="protein sequence ID" value="CCP43018.1"/>
    <property type="molecule type" value="Genomic_DNA"/>
</dbReference>
<dbReference type="PIR" id="F70836">
    <property type="entry name" value="F70836"/>
</dbReference>
<dbReference type="RefSeq" id="NP_214802.1">
    <property type="nucleotide sequence ID" value="NC_000962.3"/>
</dbReference>
<dbReference type="RefSeq" id="WP_003401514.1">
    <property type="nucleotide sequence ID" value="NZ_NVQJ01000026.1"/>
</dbReference>
<dbReference type="PDB" id="2KG7">
    <property type="method" value="NMR"/>
    <property type="chains" value="B=1-96"/>
</dbReference>
<dbReference type="PDB" id="6J29">
    <property type="method" value="X-ray"/>
    <property type="resolution" value="1.60 A"/>
    <property type="chains" value="C=3-11"/>
</dbReference>
<dbReference type="PDB" id="7P4B">
    <property type="method" value="X-ray"/>
    <property type="resolution" value="1.72 A"/>
    <property type="chains" value="P/Q/R/Z=4-12"/>
</dbReference>
<dbReference type="PDBsum" id="2KG7"/>
<dbReference type="PDBsum" id="6J29"/>
<dbReference type="PDBsum" id="7P4B"/>
<dbReference type="BMRB" id="P9WNK3"/>
<dbReference type="SMR" id="P9WNK3"/>
<dbReference type="FunCoup" id="P9WNK3">
    <property type="interactions" value="1"/>
</dbReference>
<dbReference type="IntAct" id="P9WNK3">
    <property type="interactions" value="1"/>
</dbReference>
<dbReference type="MINT" id="P9WNK3"/>
<dbReference type="STRING" id="83332.Rv0288"/>
<dbReference type="PaxDb" id="83332-Rv0288"/>
<dbReference type="DNASU" id="886603"/>
<dbReference type="GeneID" id="45424262"/>
<dbReference type="GeneID" id="886603"/>
<dbReference type="KEGG" id="mtu:Rv0288"/>
<dbReference type="KEGG" id="mtv:RVBD_0288"/>
<dbReference type="TubercuList" id="Rv0288"/>
<dbReference type="eggNOG" id="COG4842">
    <property type="taxonomic scope" value="Bacteria"/>
</dbReference>
<dbReference type="InParanoid" id="P9WNK3"/>
<dbReference type="OrthoDB" id="4738087at2"/>
<dbReference type="PhylomeDB" id="P9WNK3"/>
<dbReference type="Reactome" id="R-HSA-9635644">
    <property type="pathway name" value="Inhibition of membrane repair"/>
</dbReference>
<dbReference type="Reactome" id="R-HSA-9636383">
    <property type="pathway name" value="Prevention of phagosomal-lysosomal fusion"/>
</dbReference>
<dbReference type="EvolutionaryTrace" id="P9WNK3"/>
<dbReference type="Proteomes" id="UP000001584">
    <property type="component" value="Chromosome"/>
</dbReference>
<dbReference type="GO" id="GO:0005829">
    <property type="term" value="C:cytosol"/>
    <property type="evidence" value="ECO:0000304"/>
    <property type="project" value="Reactome"/>
</dbReference>
<dbReference type="GO" id="GO:0005576">
    <property type="term" value="C:extracellular region"/>
    <property type="evidence" value="ECO:0007669"/>
    <property type="project" value="UniProtKB-SubCell"/>
</dbReference>
<dbReference type="GO" id="GO:0097013">
    <property type="term" value="C:phagocytic vesicle lumen"/>
    <property type="evidence" value="ECO:0000304"/>
    <property type="project" value="Reactome"/>
</dbReference>
<dbReference type="GO" id="GO:0046872">
    <property type="term" value="F:metal ion binding"/>
    <property type="evidence" value="ECO:0007669"/>
    <property type="project" value="UniProtKB-KW"/>
</dbReference>
<dbReference type="DisProt" id="DP00799"/>
<dbReference type="Gene3D" id="1.10.287.1060">
    <property type="entry name" value="ESAT-6-like"/>
    <property type="match status" value="1"/>
</dbReference>
<dbReference type="InterPro" id="IPR036689">
    <property type="entry name" value="ESAT-6-like_sf"/>
</dbReference>
<dbReference type="InterPro" id="IPR010310">
    <property type="entry name" value="T7SS_ESAT-6-like"/>
</dbReference>
<dbReference type="NCBIfam" id="TIGR03930">
    <property type="entry name" value="WXG100_ESAT6"/>
    <property type="match status" value="1"/>
</dbReference>
<dbReference type="Pfam" id="PF06013">
    <property type="entry name" value="WXG100"/>
    <property type="match status" value="1"/>
</dbReference>
<dbReference type="SUPFAM" id="SSF140453">
    <property type="entry name" value="EsxAB dimer-like"/>
    <property type="match status" value="1"/>
</dbReference>
<protein>
    <recommendedName>
        <fullName evidence="14">ESAT-6-like protein EsxH</fullName>
    </recommendedName>
    <alternativeName>
        <fullName evidence="14">10 kDa antigen CFP7</fullName>
        <shortName evidence="14">CFP-7</shortName>
    </alternativeName>
    <alternativeName>
        <fullName evidence="14">Low molecular weight protein antigen 7</fullName>
    </alternativeName>
    <alternativeName>
        <fullName evidence="11">Protein TB10.4</fullName>
    </alternativeName>
</protein>
<feature type="chain" id="PRO_0000167798" description="ESAT-6-like protein EsxH">
    <location>
        <begin position="1"/>
        <end position="96"/>
    </location>
</feature>
<feature type="binding site" evidence="16">
    <location>
        <position position="14"/>
    </location>
    <ligand>
        <name>Zn(2+)</name>
        <dbReference type="ChEBI" id="CHEBI:29105"/>
    </ligand>
</feature>
<feature type="binding site" evidence="16">
    <location>
        <position position="70"/>
    </location>
    <ligand>
        <name>Zn(2+)</name>
        <dbReference type="ChEBI" id="CHEBI:29105"/>
    </ligand>
</feature>
<feature type="binding site" evidence="16">
    <location>
        <position position="76"/>
    </location>
    <ligand>
        <name>Zn(2+)</name>
        <dbReference type="ChEBI" id="CHEBI:29105"/>
    </ligand>
</feature>
<feature type="binding site" evidence="16">
    <location>
        <position position="77"/>
    </location>
    <ligand>
        <name>Zn(2+)</name>
        <dbReference type="ChEBI" id="CHEBI:29105"/>
    </ligand>
</feature>
<feature type="mutagenesis site" description="No change in activity." evidence="9">
    <original>H</original>
    <variation>A</variation>
    <location>
        <position position="14"/>
    </location>
</feature>
<feature type="mutagenesis site" description="No change in activity." evidence="9">
    <original>H</original>
    <variation>R</variation>
    <location>
        <position position="70"/>
    </location>
</feature>
<feature type="mutagenesis site" description="Still interacts with EsxG, but impairs interaction with host HGS/HRS; when associated with A-77." evidence="9">
    <original>H</original>
    <variation>A</variation>
    <location>
        <position position="76"/>
    </location>
</feature>
<feature type="mutagenesis site" description="Still interacts with EsxG, but impairs interaction with host HGS/HRS; when associated with A-76." evidence="9">
    <original>E</original>
    <variation>A</variation>
    <location>
        <position position="77"/>
    </location>
</feature>
<feature type="turn" evidence="18">
    <location>
        <begin position="3"/>
        <end position="5"/>
    </location>
</feature>
<feature type="strand" evidence="18">
    <location>
        <begin position="10"/>
        <end position="13"/>
    </location>
</feature>
<feature type="helix" evidence="18">
    <location>
        <begin position="18"/>
        <end position="38"/>
    </location>
</feature>
<feature type="helix" evidence="18">
    <location>
        <begin position="39"/>
        <end position="42"/>
    </location>
</feature>
<feature type="strand" evidence="18">
    <location>
        <begin position="45"/>
        <end position="48"/>
    </location>
</feature>
<feature type="helix" evidence="18">
    <location>
        <begin position="51"/>
        <end position="70"/>
    </location>
</feature>
<feature type="helix" evidence="18">
    <location>
        <begin position="72"/>
        <end position="74"/>
    </location>
</feature>
<feature type="helix" evidence="18">
    <location>
        <begin position="75"/>
        <end position="81"/>
    </location>
</feature>
<feature type="turn" evidence="18">
    <location>
        <begin position="84"/>
        <end position="86"/>
    </location>
</feature>
<feature type="turn" evidence="18">
    <location>
        <begin position="90"/>
        <end position="92"/>
    </location>
</feature>
<sequence length="96" mass="10391">MSQIMYNYPAMLGHAGDMAGYAGTLQSLGAEIAVEQAALQSAWQGDTGITYQAWQAQWNQAMEDLVRAYHAMSSTHEANTMAMMARDTAEAAKWGG</sequence>
<keyword id="KW-0002">3D-structure</keyword>
<keyword id="KW-0903">Direct protein sequencing</keyword>
<keyword id="KW-0479">Metal-binding</keyword>
<keyword id="KW-1185">Reference proteome</keyword>
<keyword id="KW-0964">Secreted</keyword>
<keyword id="KW-0843">Virulence</keyword>
<keyword id="KW-0862">Zinc</keyword>
<evidence type="ECO:0000269" key="1">
    <source>
    </source>
</evidence>
<evidence type="ECO:0000269" key="2">
    <source>
    </source>
</evidence>
<evidence type="ECO:0000269" key="3">
    <source>
    </source>
</evidence>
<evidence type="ECO:0000269" key="4">
    <source>
    </source>
</evidence>
<evidence type="ECO:0000269" key="5">
    <source>
    </source>
</evidence>
<evidence type="ECO:0000269" key="6">
    <source>
    </source>
</evidence>
<evidence type="ECO:0000269" key="7">
    <source>
    </source>
</evidence>
<evidence type="ECO:0000269" key="8">
    <source>
    </source>
</evidence>
<evidence type="ECO:0000269" key="9">
    <source>
    </source>
</evidence>
<evidence type="ECO:0000269" key="10">
    <source>
    </source>
</evidence>
<evidence type="ECO:0000303" key="11">
    <source>
    </source>
</evidence>
<evidence type="ECO:0000303" key="12">
    <source>
    </source>
</evidence>
<evidence type="ECO:0000303" key="13">
    <source>
    </source>
</evidence>
<evidence type="ECO:0000305" key="14"/>
<evidence type="ECO:0000305" key="15">
    <source>
    </source>
</evidence>
<evidence type="ECO:0000305" key="16">
    <source>
    </source>
</evidence>
<evidence type="ECO:0000305" key="17">
    <source>
    </source>
</evidence>
<evidence type="ECO:0007829" key="18">
    <source>
        <dbReference type="PDB" id="2KG7"/>
    </source>
</evidence>
<comment type="function">
    <text evidence="9">EsxH, in complex with EsxG, disrupts ESCRT function and impairs host phagosome maturation, thereby promoting intracellular bacterial growth. The complex acts by interacting, via EsxH, with the host hepatocyte growth factor-regulated tyrosine kinase substrate (HGS/HRS), a component of the ESCRT machinery.</text>
</comment>
<comment type="subunit">
    <text evidence="3 5 6 7 8 9">Forms a tight 1:1 complex with EsxG (PubMed:15336430, PubMed:18430736, PubMed:19854905, PubMed:20085764, PubMed:21730061, PubMed:24204276). When it is complexed to EsxG, interacts directly with host HGS/HRS (PubMed:24204276).</text>
</comment>
<comment type="interaction">
    <interactant intactId="EBI-6409599">
        <id>P9WNK3</id>
    </interactant>
    <interactant intactId="EBI-6409586">
        <id>O53692</id>
        <label>esxG</label>
    </interactant>
    <organismsDiffer>false</organismsDiffer>
    <experiments>4</experiments>
</comment>
<comment type="subcellular location">
    <subcellularLocation>
        <location evidence="9">Secreted</location>
    </subcellularLocation>
    <text evidence="16 17">Secreted via the ESX-3 / type VII secretion system (T7SS).</text>
</comment>
<comment type="biotechnology">
    <text evidence="1 2 4 10">Contains a number of strongly recognized T-cell epitopes distributed throughout the protein sequence and induces high level of IFN-gamma, indicating this might be a good vaccine candidate (PubMed:10603390, PubMed:12228269, PubMed:16714570). A fusion protein (p846) of 3 well-defined antigens (EspC, EsxH and Rv2660c) induces robust specific T-cell immune response and could be an effective vaccine (PubMed:24280763).</text>
</comment>
<comment type="miscellaneous">
    <text evidence="6">To improve expression in E.coli the proteins were cloned as a single protein in the order esxH-esxG with a cleavable thrombin tag (PubMed:19854905).</text>
</comment>
<comment type="similarity">
    <text evidence="15">Belongs to the WXG100 family. ESAT-6 subfamily.</text>
</comment>